<reference key="1">
    <citation type="journal article" date="2009" name="J. Bacteriol.">
        <title>Complete and draft genome sequences of six members of the Aquificales.</title>
        <authorList>
            <person name="Reysenbach A.-L."/>
            <person name="Hamamura N."/>
            <person name="Podar M."/>
            <person name="Griffiths E."/>
            <person name="Ferreira S."/>
            <person name="Hochstein R."/>
            <person name="Heidelberg J."/>
            <person name="Johnson J."/>
            <person name="Mead D."/>
            <person name="Pohorille A."/>
            <person name="Sarmiento M."/>
            <person name="Schweighofer K."/>
            <person name="Seshadri R."/>
            <person name="Voytek M.A."/>
        </authorList>
    </citation>
    <scope>NUCLEOTIDE SEQUENCE [LARGE SCALE GENOMIC DNA]</scope>
    <source>
        <strain>Y04AAS1</strain>
    </source>
</reference>
<sequence length="319" mass="35699">MKEFIFPMKIYWEEKDKNYGRFVVEPLERGYGTTIGNALRRVLLSSIYGSAITAVKIEGVQHEFSTIEGVQEDVLQIIANLKNVRFDLKDSDLEILYLEKNAPGVVLASDIKTPPNVTIINKDAYIATINSANTTLKMEIRIERGKGYVMSDEMEQIGEAGWVVLDADFSPIKVAAFRVEATRVGDRTDYDKLTFELTTNGVVSPDTAIQQAVELIVKHMNMLTNISYEVPTLPEPMPPDELMEKLTFSIEELDISQRALNSLKRIGVTTIGELVQLTEDELKSSKNIGRKALTEIKEALKNMGFSLGMNIGEQRSSEV</sequence>
<name>RPOA_HYDS0</name>
<evidence type="ECO:0000255" key="1">
    <source>
        <dbReference type="HAMAP-Rule" id="MF_00059"/>
    </source>
</evidence>
<dbReference type="EC" id="2.7.7.6" evidence="1"/>
<dbReference type="EMBL" id="CP001130">
    <property type="protein sequence ID" value="ACG56983.1"/>
    <property type="molecule type" value="Genomic_DNA"/>
</dbReference>
<dbReference type="RefSeq" id="WP_012513339.1">
    <property type="nucleotide sequence ID" value="NC_011126.1"/>
</dbReference>
<dbReference type="SMR" id="B4U772"/>
<dbReference type="STRING" id="380749.HY04AAS1_0293"/>
<dbReference type="KEGG" id="hya:HY04AAS1_0293"/>
<dbReference type="eggNOG" id="COG0202">
    <property type="taxonomic scope" value="Bacteria"/>
</dbReference>
<dbReference type="HOGENOM" id="CLU_053084_0_1_0"/>
<dbReference type="OrthoDB" id="9805706at2"/>
<dbReference type="GO" id="GO:0005737">
    <property type="term" value="C:cytoplasm"/>
    <property type="evidence" value="ECO:0007669"/>
    <property type="project" value="UniProtKB-ARBA"/>
</dbReference>
<dbReference type="GO" id="GO:0000428">
    <property type="term" value="C:DNA-directed RNA polymerase complex"/>
    <property type="evidence" value="ECO:0007669"/>
    <property type="project" value="UniProtKB-KW"/>
</dbReference>
<dbReference type="GO" id="GO:0003677">
    <property type="term" value="F:DNA binding"/>
    <property type="evidence" value="ECO:0007669"/>
    <property type="project" value="UniProtKB-UniRule"/>
</dbReference>
<dbReference type="GO" id="GO:0003899">
    <property type="term" value="F:DNA-directed RNA polymerase activity"/>
    <property type="evidence" value="ECO:0007669"/>
    <property type="project" value="UniProtKB-UniRule"/>
</dbReference>
<dbReference type="GO" id="GO:0046983">
    <property type="term" value="F:protein dimerization activity"/>
    <property type="evidence" value="ECO:0007669"/>
    <property type="project" value="InterPro"/>
</dbReference>
<dbReference type="GO" id="GO:0006351">
    <property type="term" value="P:DNA-templated transcription"/>
    <property type="evidence" value="ECO:0007669"/>
    <property type="project" value="UniProtKB-UniRule"/>
</dbReference>
<dbReference type="CDD" id="cd06928">
    <property type="entry name" value="RNAP_alpha_NTD"/>
    <property type="match status" value="1"/>
</dbReference>
<dbReference type="FunFam" id="2.170.120.12:FF:000001">
    <property type="entry name" value="DNA-directed RNA polymerase subunit alpha"/>
    <property type="match status" value="1"/>
</dbReference>
<dbReference type="Gene3D" id="1.10.150.20">
    <property type="entry name" value="5' to 3' exonuclease, C-terminal subdomain"/>
    <property type="match status" value="1"/>
</dbReference>
<dbReference type="Gene3D" id="2.170.120.12">
    <property type="entry name" value="DNA-directed RNA polymerase, insert domain"/>
    <property type="match status" value="1"/>
</dbReference>
<dbReference type="Gene3D" id="3.30.1360.10">
    <property type="entry name" value="RNA polymerase, RBP11-like subunit"/>
    <property type="match status" value="1"/>
</dbReference>
<dbReference type="HAMAP" id="MF_00059">
    <property type="entry name" value="RNApol_bact_RpoA"/>
    <property type="match status" value="1"/>
</dbReference>
<dbReference type="InterPro" id="IPR011262">
    <property type="entry name" value="DNA-dir_RNA_pol_insert"/>
</dbReference>
<dbReference type="InterPro" id="IPR011263">
    <property type="entry name" value="DNA-dir_RNA_pol_RpoA/D/Rpb3"/>
</dbReference>
<dbReference type="InterPro" id="IPR011773">
    <property type="entry name" value="DNA-dir_RpoA"/>
</dbReference>
<dbReference type="InterPro" id="IPR036603">
    <property type="entry name" value="RBP11-like"/>
</dbReference>
<dbReference type="InterPro" id="IPR011260">
    <property type="entry name" value="RNAP_asu_C"/>
</dbReference>
<dbReference type="InterPro" id="IPR036643">
    <property type="entry name" value="RNApol_insert_sf"/>
</dbReference>
<dbReference type="NCBIfam" id="NF003513">
    <property type="entry name" value="PRK05182.1-2"/>
    <property type="match status" value="1"/>
</dbReference>
<dbReference type="NCBIfam" id="NF003519">
    <property type="entry name" value="PRK05182.2-5"/>
    <property type="match status" value="1"/>
</dbReference>
<dbReference type="NCBIfam" id="TIGR02027">
    <property type="entry name" value="rpoA"/>
    <property type="match status" value="1"/>
</dbReference>
<dbReference type="Pfam" id="PF01000">
    <property type="entry name" value="RNA_pol_A_bac"/>
    <property type="match status" value="1"/>
</dbReference>
<dbReference type="Pfam" id="PF03118">
    <property type="entry name" value="RNA_pol_A_CTD"/>
    <property type="match status" value="1"/>
</dbReference>
<dbReference type="Pfam" id="PF01193">
    <property type="entry name" value="RNA_pol_L"/>
    <property type="match status" value="1"/>
</dbReference>
<dbReference type="SMART" id="SM00662">
    <property type="entry name" value="RPOLD"/>
    <property type="match status" value="1"/>
</dbReference>
<dbReference type="SUPFAM" id="SSF47789">
    <property type="entry name" value="C-terminal domain of RNA polymerase alpha subunit"/>
    <property type="match status" value="1"/>
</dbReference>
<dbReference type="SUPFAM" id="SSF56553">
    <property type="entry name" value="Insert subdomain of RNA polymerase alpha subunit"/>
    <property type="match status" value="1"/>
</dbReference>
<dbReference type="SUPFAM" id="SSF55257">
    <property type="entry name" value="RBP11-like subunits of RNA polymerase"/>
    <property type="match status" value="1"/>
</dbReference>
<organism>
    <name type="scientific">Hydrogenobaculum sp. (strain Y04AAS1)</name>
    <dbReference type="NCBI Taxonomy" id="380749"/>
    <lineage>
        <taxon>Bacteria</taxon>
        <taxon>Pseudomonadati</taxon>
        <taxon>Aquificota</taxon>
        <taxon>Aquificia</taxon>
        <taxon>Aquificales</taxon>
        <taxon>Aquificaceae</taxon>
        <taxon>Hydrogenobaculum</taxon>
    </lineage>
</organism>
<protein>
    <recommendedName>
        <fullName evidence="1">DNA-directed RNA polymerase subunit alpha</fullName>
        <shortName evidence="1">RNAP subunit alpha</shortName>
        <ecNumber evidence="1">2.7.7.6</ecNumber>
    </recommendedName>
    <alternativeName>
        <fullName evidence="1">RNA polymerase subunit alpha</fullName>
    </alternativeName>
    <alternativeName>
        <fullName evidence="1">Transcriptase subunit alpha</fullName>
    </alternativeName>
</protein>
<accession>B4U772</accession>
<proteinExistence type="inferred from homology"/>
<feature type="chain" id="PRO_1000091950" description="DNA-directed RNA polymerase subunit alpha">
    <location>
        <begin position="1"/>
        <end position="319"/>
    </location>
</feature>
<feature type="region of interest" description="Alpha N-terminal domain (alpha-NTD)" evidence="1">
    <location>
        <begin position="1"/>
        <end position="227"/>
    </location>
</feature>
<feature type="region of interest" description="Alpha C-terminal domain (alpha-CTD)" evidence="1">
    <location>
        <begin position="242"/>
        <end position="319"/>
    </location>
</feature>
<comment type="function">
    <text evidence="1">DNA-dependent RNA polymerase catalyzes the transcription of DNA into RNA using the four ribonucleoside triphosphates as substrates.</text>
</comment>
<comment type="catalytic activity">
    <reaction evidence="1">
        <text>RNA(n) + a ribonucleoside 5'-triphosphate = RNA(n+1) + diphosphate</text>
        <dbReference type="Rhea" id="RHEA:21248"/>
        <dbReference type="Rhea" id="RHEA-COMP:14527"/>
        <dbReference type="Rhea" id="RHEA-COMP:17342"/>
        <dbReference type="ChEBI" id="CHEBI:33019"/>
        <dbReference type="ChEBI" id="CHEBI:61557"/>
        <dbReference type="ChEBI" id="CHEBI:140395"/>
        <dbReference type="EC" id="2.7.7.6"/>
    </reaction>
</comment>
<comment type="subunit">
    <text evidence="1">Homodimer. The RNAP catalytic core consists of 2 alpha, 1 beta, 1 beta' and 1 omega subunit. When a sigma factor is associated with the core the holoenzyme is formed, which can initiate transcription.</text>
</comment>
<comment type="domain">
    <text evidence="1">The N-terminal domain is essential for RNAP assembly and basal transcription, whereas the C-terminal domain is involved in interaction with transcriptional regulators and with upstream promoter elements.</text>
</comment>
<comment type="similarity">
    <text evidence="1">Belongs to the RNA polymerase alpha chain family.</text>
</comment>
<keyword id="KW-0240">DNA-directed RNA polymerase</keyword>
<keyword id="KW-0548">Nucleotidyltransferase</keyword>
<keyword id="KW-0804">Transcription</keyword>
<keyword id="KW-0808">Transferase</keyword>
<gene>
    <name evidence="1" type="primary">rpoA</name>
    <name type="ordered locus">HY04AAS1_0293</name>
</gene>